<comment type="function">
    <text evidence="1">Binds to DNA and alters its conformation. May be involved in regulation of gene expression, nucleoid organization and DNA protection.</text>
</comment>
<comment type="subunit">
    <text evidence="1">Homodimer.</text>
</comment>
<comment type="subcellular location">
    <subcellularLocation>
        <location evidence="1">Cytoplasm</location>
        <location evidence="1">Nucleoid</location>
    </subcellularLocation>
</comment>
<comment type="similarity">
    <text evidence="1">Belongs to the YbaB/EbfC family.</text>
</comment>
<proteinExistence type="inferred from homology"/>
<feature type="chain" id="PRO_1000003816" description="Nucleoid-associated protein A1G_07310">
    <location>
        <begin position="1"/>
        <end position="107"/>
    </location>
</feature>
<sequence>MVNFNQFLKQAQSMQKKMQEAQEQMANARYTGKAGGGLVEVIATGKGEVEKISIDESLLKAEEKEMLEDLIKVAFNNAQQKCDEDSQNSLSGALNGMRLPPGFKMPF</sequence>
<organism>
    <name type="scientific">Rickettsia rickettsii (strain Sheila Smith)</name>
    <dbReference type="NCBI Taxonomy" id="392021"/>
    <lineage>
        <taxon>Bacteria</taxon>
        <taxon>Pseudomonadati</taxon>
        <taxon>Pseudomonadota</taxon>
        <taxon>Alphaproteobacteria</taxon>
        <taxon>Rickettsiales</taxon>
        <taxon>Rickettsiaceae</taxon>
        <taxon>Rickettsieae</taxon>
        <taxon>Rickettsia</taxon>
        <taxon>spotted fever group</taxon>
    </lineage>
</organism>
<reference key="1">
    <citation type="submission" date="2007-09" db="EMBL/GenBank/DDBJ databases">
        <title>Complete genome sequence of Rickettsia rickettsii.</title>
        <authorList>
            <person name="Madan A."/>
            <person name="Fahey J."/>
            <person name="Helton E."/>
            <person name="Ketteman M."/>
            <person name="Madan A."/>
            <person name="Rodrigues S."/>
            <person name="Sanchez A."/>
            <person name="Dasch G."/>
            <person name="Eremeeva M."/>
        </authorList>
    </citation>
    <scope>NUCLEOTIDE SEQUENCE [LARGE SCALE GENOMIC DNA]</scope>
    <source>
        <strain>Sheila Smith</strain>
    </source>
</reference>
<dbReference type="EMBL" id="CP000848">
    <property type="protein sequence ID" value="ABV76901.1"/>
    <property type="molecule type" value="Genomic_DNA"/>
</dbReference>
<dbReference type="RefSeq" id="WP_012151438.1">
    <property type="nucleotide sequence ID" value="NZ_CP121767.1"/>
</dbReference>
<dbReference type="SMR" id="A8GU26"/>
<dbReference type="GeneID" id="79937934"/>
<dbReference type="KEGG" id="rri:A1G_07310"/>
<dbReference type="HOGENOM" id="CLU_140930_0_0_5"/>
<dbReference type="Proteomes" id="UP000006832">
    <property type="component" value="Chromosome"/>
</dbReference>
<dbReference type="GO" id="GO:0043590">
    <property type="term" value="C:bacterial nucleoid"/>
    <property type="evidence" value="ECO:0007669"/>
    <property type="project" value="UniProtKB-UniRule"/>
</dbReference>
<dbReference type="GO" id="GO:0005829">
    <property type="term" value="C:cytosol"/>
    <property type="evidence" value="ECO:0007669"/>
    <property type="project" value="TreeGrafter"/>
</dbReference>
<dbReference type="GO" id="GO:0003677">
    <property type="term" value="F:DNA binding"/>
    <property type="evidence" value="ECO:0007669"/>
    <property type="project" value="UniProtKB-UniRule"/>
</dbReference>
<dbReference type="Gene3D" id="3.30.1310.10">
    <property type="entry name" value="Nucleoid-associated protein YbaB-like domain"/>
    <property type="match status" value="1"/>
</dbReference>
<dbReference type="HAMAP" id="MF_00274">
    <property type="entry name" value="DNA_YbaB_EbfC"/>
    <property type="match status" value="1"/>
</dbReference>
<dbReference type="InterPro" id="IPR036894">
    <property type="entry name" value="YbaB-like_sf"/>
</dbReference>
<dbReference type="InterPro" id="IPR004401">
    <property type="entry name" value="YbaB/EbfC"/>
</dbReference>
<dbReference type="NCBIfam" id="TIGR00103">
    <property type="entry name" value="DNA_YbaB_EbfC"/>
    <property type="match status" value="1"/>
</dbReference>
<dbReference type="PANTHER" id="PTHR33449">
    <property type="entry name" value="NUCLEOID-ASSOCIATED PROTEIN YBAB"/>
    <property type="match status" value="1"/>
</dbReference>
<dbReference type="PANTHER" id="PTHR33449:SF1">
    <property type="entry name" value="NUCLEOID-ASSOCIATED PROTEIN YBAB"/>
    <property type="match status" value="1"/>
</dbReference>
<dbReference type="Pfam" id="PF02575">
    <property type="entry name" value="YbaB_DNA_bd"/>
    <property type="match status" value="1"/>
</dbReference>
<dbReference type="PIRSF" id="PIRSF004555">
    <property type="entry name" value="UCP004555"/>
    <property type="match status" value="1"/>
</dbReference>
<dbReference type="SUPFAM" id="SSF82607">
    <property type="entry name" value="YbaB-like"/>
    <property type="match status" value="1"/>
</dbReference>
<gene>
    <name type="ordered locus">A1G_07310</name>
</gene>
<name>Y7310_RICRS</name>
<protein>
    <recommendedName>
        <fullName evidence="1">Nucleoid-associated protein A1G_07310</fullName>
    </recommendedName>
</protein>
<evidence type="ECO:0000255" key="1">
    <source>
        <dbReference type="HAMAP-Rule" id="MF_00274"/>
    </source>
</evidence>
<keyword id="KW-0963">Cytoplasm</keyword>
<keyword id="KW-0238">DNA-binding</keyword>
<accession>A8GU26</accession>